<name>YHFE_BACSU</name>
<dbReference type="EC" id="3.4.11.-"/>
<dbReference type="EMBL" id="Y14083">
    <property type="protein sequence ID" value="CAA74526.1"/>
    <property type="molecule type" value="Genomic_DNA"/>
</dbReference>
<dbReference type="EMBL" id="AL009126">
    <property type="protein sequence ID" value="CAB12860.1"/>
    <property type="molecule type" value="Genomic_DNA"/>
</dbReference>
<dbReference type="PIR" id="C69830">
    <property type="entry name" value="C69830"/>
</dbReference>
<dbReference type="RefSeq" id="NP_388901.1">
    <property type="nucleotide sequence ID" value="NC_000964.3"/>
</dbReference>
<dbReference type="RefSeq" id="WP_009966936.1">
    <property type="nucleotide sequence ID" value="NZ_OZ025638.1"/>
</dbReference>
<dbReference type="SMR" id="O07603"/>
<dbReference type="FunCoup" id="O07603">
    <property type="interactions" value="4"/>
</dbReference>
<dbReference type="STRING" id="224308.BSU10200"/>
<dbReference type="MEROPS" id="M42.A02"/>
<dbReference type="PaxDb" id="224308-BSU10200"/>
<dbReference type="EnsemblBacteria" id="CAB12860">
    <property type="protein sequence ID" value="CAB12860"/>
    <property type="gene ID" value="BSU_10200"/>
</dbReference>
<dbReference type="GeneID" id="936306"/>
<dbReference type="KEGG" id="bsu:BSU10200"/>
<dbReference type="PATRIC" id="fig|224308.179.peg.1096"/>
<dbReference type="eggNOG" id="COG1363">
    <property type="taxonomic scope" value="Bacteria"/>
</dbReference>
<dbReference type="InParanoid" id="O07603"/>
<dbReference type="OrthoDB" id="361940at2"/>
<dbReference type="PhylomeDB" id="O07603"/>
<dbReference type="BioCyc" id="BSUB:BSU10200-MONOMER"/>
<dbReference type="Proteomes" id="UP000001570">
    <property type="component" value="Chromosome"/>
</dbReference>
<dbReference type="GO" id="GO:0004177">
    <property type="term" value="F:aminopeptidase activity"/>
    <property type="evidence" value="ECO:0007669"/>
    <property type="project" value="UniProtKB-KW"/>
</dbReference>
<dbReference type="GO" id="GO:0046872">
    <property type="term" value="F:metal ion binding"/>
    <property type="evidence" value="ECO:0007669"/>
    <property type="project" value="UniProtKB-KW"/>
</dbReference>
<dbReference type="GO" id="GO:0008237">
    <property type="term" value="F:metallopeptidase activity"/>
    <property type="evidence" value="ECO:0007669"/>
    <property type="project" value="UniProtKB-KW"/>
</dbReference>
<dbReference type="GO" id="GO:0006508">
    <property type="term" value="P:proteolysis"/>
    <property type="evidence" value="ECO:0007669"/>
    <property type="project" value="UniProtKB-KW"/>
</dbReference>
<dbReference type="CDD" id="cd05657">
    <property type="entry name" value="M42_glucanase_like"/>
    <property type="match status" value="1"/>
</dbReference>
<dbReference type="Gene3D" id="2.40.30.40">
    <property type="entry name" value="Peptidase M42, domain 2"/>
    <property type="match status" value="1"/>
</dbReference>
<dbReference type="Gene3D" id="3.40.630.10">
    <property type="entry name" value="Zn peptidases"/>
    <property type="match status" value="1"/>
</dbReference>
<dbReference type="InterPro" id="IPR008007">
    <property type="entry name" value="Peptidase_M42"/>
</dbReference>
<dbReference type="InterPro" id="IPR051464">
    <property type="entry name" value="Peptidase_M42_aminopept"/>
</dbReference>
<dbReference type="InterPro" id="IPR023367">
    <property type="entry name" value="Peptidase_M42_dom2"/>
</dbReference>
<dbReference type="PANTHER" id="PTHR32481">
    <property type="entry name" value="AMINOPEPTIDASE"/>
    <property type="match status" value="1"/>
</dbReference>
<dbReference type="PANTHER" id="PTHR32481:SF7">
    <property type="entry name" value="AMINOPEPTIDASE YHFE-RELATED"/>
    <property type="match status" value="1"/>
</dbReference>
<dbReference type="Pfam" id="PF05343">
    <property type="entry name" value="Peptidase_M42"/>
    <property type="match status" value="1"/>
</dbReference>
<dbReference type="PIRSF" id="PIRSF001123">
    <property type="entry name" value="PepA_GA"/>
    <property type="match status" value="1"/>
</dbReference>
<dbReference type="SUPFAM" id="SSF101821">
    <property type="entry name" value="Aminopeptidase/glucanase lid domain"/>
    <property type="match status" value="1"/>
</dbReference>
<dbReference type="SUPFAM" id="SSF53187">
    <property type="entry name" value="Zn-dependent exopeptidases"/>
    <property type="match status" value="1"/>
</dbReference>
<feature type="chain" id="PRO_0000389625" description="Putative aminopeptidase YhfE">
    <location>
        <begin position="1"/>
        <end position="346"/>
    </location>
</feature>
<feature type="active site" description="Proton acceptor" evidence="1">
    <location>
        <position position="219"/>
    </location>
</feature>
<feature type="binding site" evidence="1">
    <location>
        <position position="68"/>
    </location>
    <ligand>
        <name>a divalent metal cation</name>
        <dbReference type="ChEBI" id="CHEBI:60240"/>
        <label>1</label>
    </ligand>
</feature>
<feature type="binding site" evidence="1">
    <location>
        <position position="185"/>
    </location>
    <ligand>
        <name>a divalent metal cation</name>
        <dbReference type="ChEBI" id="CHEBI:60240"/>
        <label>1</label>
    </ligand>
</feature>
<feature type="binding site" evidence="1">
    <location>
        <position position="185"/>
    </location>
    <ligand>
        <name>a divalent metal cation</name>
        <dbReference type="ChEBI" id="CHEBI:60240"/>
        <label>2</label>
    </ligand>
</feature>
<feature type="binding site" evidence="1">
    <location>
        <position position="220"/>
    </location>
    <ligand>
        <name>a divalent metal cation</name>
        <dbReference type="ChEBI" id="CHEBI:60240"/>
        <label>2</label>
    </ligand>
</feature>
<feature type="binding site" evidence="1">
    <location>
        <position position="240"/>
    </location>
    <ligand>
        <name>a divalent metal cation</name>
        <dbReference type="ChEBI" id="CHEBI:60240"/>
        <label>1</label>
    </ligand>
</feature>
<feature type="binding site" evidence="1">
    <location>
        <position position="320"/>
    </location>
    <ligand>
        <name>a divalent metal cation</name>
        <dbReference type="ChEBI" id="CHEBI:60240"/>
        <label>2</label>
    </ligand>
</feature>
<organism>
    <name type="scientific">Bacillus subtilis (strain 168)</name>
    <dbReference type="NCBI Taxonomy" id="224308"/>
    <lineage>
        <taxon>Bacteria</taxon>
        <taxon>Bacillati</taxon>
        <taxon>Bacillota</taxon>
        <taxon>Bacilli</taxon>
        <taxon>Bacillales</taxon>
        <taxon>Bacillaceae</taxon>
        <taxon>Bacillus</taxon>
    </lineage>
</organism>
<reference key="1">
    <citation type="journal article" date="1998" name="Microbiology">
        <title>The 172 kb prkA-addAB region from 83 degrees to 97 degrees of the Bacillus subtilis chromosome contains several dysfunctional genes, the glyB marker, many genes encoding transporter proteins, and the ubiquitous hit gene.</title>
        <authorList>
            <person name="Noback M.A."/>
            <person name="Holsappel S."/>
            <person name="Kiewiet R."/>
            <person name="Terpstra P."/>
            <person name="Wambutt R."/>
            <person name="Wedler H."/>
            <person name="Venema G."/>
            <person name="Bron S."/>
        </authorList>
    </citation>
    <scope>NUCLEOTIDE SEQUENCE [GENOMIC DNA]</scope>
    <source>
        <strain>168</strain>
    </source>
</reference>
<reference key="2">
    <citation type="journal article" date="1997" name="Nature">
        <title>The complete genome sequence of the Gram-positive bacterium Bacillus subtilis.</title>
        <authorList>
            <person name="Kunst F."/>
            <person name="Ogasawara N."/>
            <person name="Moszer I."/>
            <person name="Albertini A.M."/>
            <person name="Alloni G."/>
            <person name="Azevedo V."/>
            <person name="Bertero M.G."/>
            <person name="Bessieres P."/>
            <person name="Bolotin A."/>
            <person name="Borchert S."/>
            <person name="Borriss R."/>
            <person name="Boursier L."/>
            <person name="Brans A."/>
            <person name="Braun M."/>
            <person name="Brignell S.C."/>
            <person name="Bron S."/>
            <person name="Brouillet S."/>
            <person name="Bruschi C.V."/>
            <person name="Caldwell B."/>
            <person name="Capuano V."/>
            <person name="Carter N.M."/>
            <person name="Choi S.-K."/>
            <person name="Codani J.-J."/>
            <person name="Connerton I.F."/>
            <person name="Cummings N.J."/>
            <person name="Daniel R.A."/>
            <person name="Denizot F."/>
            <person name="Devine K.M."/>
            <person name="Duesterhoeft A."/>
            <person name="Ehrlich S.D."/>
            <person name="Emmerson P.T."/>
            <person name="Entian K.-D."/>
            <person name="Errington J."/>
            <person name="Fabret C."/>
            <person name="Ferrari E."/>
            <person name="Foulger D."/>
            <person name="Fritz C."/>
            <person name="Fujita M."/>
            <person name="Fujita Y."/>
            <person name="Fuma S."/>
            <person name="Galizzi A."/>
            <person name="Galleron N."/>
            <person name="Ghim S.-Y."/>
            <person name="Glaser P."/>
            <person name="Goffeau A."/>
            <person name="Golightly E.J."/>
            <person name="Grandi G."/>
            <person name="Guiseppi G."/>
            <person name="Guy B.J."/>
            <person name="Haga K."/>
            <person name="Haiech J."/>
            <person name="Harwood C.R."/>
            <person name="Henaut A."/>
            <person name="Hilbert H."/>
            <person name="Holsappel S."/>
            <person name="Hosono S."/>
            <person name="Hullo M.-F."/>
            <person name="Itaya M."/>
            <person name="Jones L.-M."/>
            <person name="Joris B."/>
            <person name="Karamata D."/>
            <person name="Kasahara Y."/>
            <person name="Klaerr-Blanchard M."/>
            <person name="Klein C."/>
            <person name="Kobayashi Y."/>
            <person name="Koetter P."/>
            <person name="Koningstein G."/>
            <person name="Krogh S."/>
            <person name="Kumano M."/>
            <person name="Kurita K."/>
            <person name="Lapidus A."/>
            <person name="Lardinois S."/>
            <person name="Lauber J."/>
            <person name="Lazarevic V."/>
            <person name="Lee S.-M."/>
            <person name="Levine A."/>
            <person name="Liu H."/>
            <person name="Masuda S."/>
            <person name="Mauel C."/>
            <person name="Medigue C."/>
            <person name="Medina N."/>
            <person name="Mellado R.P."/>
            <person name="Mizuno M."/>
            <person name="Moestl D."/>
            <person name="Nakai S."/>
            <person name="Noback M."/>
            <person name="Noone D."/>
            <person name="O'Reilly M."/>
            <person name="Ogawa K."/>
            <person name="Ogiwara A."/>
            <person name="Oudega B."/>
            <person name="Park S.-H."/>
            <person name="Parro V."/>
            <person name="Pohl T.M."/>
            <person name="Portetelle D."/>
            <person name="Porwollik S."/>
            <person name="Prescott A.M."/>
            <person name="Presecan E."/>
            <person name="Pujic P."/>
            <person name="Purnelle B."/>
            <person name="Rapoport G."/>
            <person name="Rey M."/>
            <person name="Reynolds S."/>
            <person name="Rieger M."/>
            <person name="Rivolta C."/>
            <person name="Rocha E."/>
            <person name="Roche B."/>
            <person name="Rose M."/>
            <person name="Sadaie Y."/>
            <person name="Sato T."/>
            <person name="Scanlan E."/>
            <person name="Schleich S."/>
            <person name="Schroeter R."/>
            <person name="Scoffone F."/>
            <person name="Sekiguchi J."/>
            <person name="Sekowska A."/>
            <person name="Seror S.J."/>
            <person name="Serror P."/>
            <person name="Shin B.-S."/>
            <person name="Soldo B."/>
            <person name="Sorokin A."/>
            <person name="Tacconi E."/>
            <person name="Takagi T."/>
            <person name="Takahashi H."/>
            <person name="Takemaru K."/>
            <person name="Takeuchi M."/>
            <person name="Tamakoshi A."/>
            <person name="Tanaka T."/>
            <person name="Terpstra P."/>
            <person name="Tognoni A."/>
            <person name="Tosato V."/>
            <person name="Uchiyama S."/>
            <person name="Vandenbol M."/>
            <person name="Vannier F."/>
            <person name="Vassarotti A."/>
            <person name="Viari A."/>
            <person name="Wambutt R."/>
            <person name="Wedler E."/>
            <person name="Wedler H."/>
            <person name="Weitzenegger T."/>
            <person name="Winters P."/>
            <person name="Wipat A."/>
            <person name="Yamamoto H."/>
            <person name="Yamane K."/>
            <person name="Yasumoto K."/>
            <person name="Yata K."/>
            <person name="Yoshida K."/>
            <person name="Yoshikawa H.-F."/>
            <person name="Zumstein E."/>
            <person name="Yoshikawa H."/>
            <person name="Danchin A."/>
        </authorList>
    </citation>
    <scope>NUCLEOTIDE SEQUENCE [LARGE SCALE GENOMIC DNA]</scope>
    <source>
        <strain>168</strain>
    </source>
</reference>
<protein>
    <recommendedName>
        <fullName>Putative aminopeptidase YhfE</fullName>
        <ecNumber>3.4.11.-</ecNumber>
    </recommendedName>
</protein>
<accession>O07603</accession>
<accession>Q796U6</accession>
<comment type="cofactor">
    <cofactor evidence="1">
        <name>a divalent metal cation</name>
        <dbReference type="ChEBI" id="CHEBI:60240"/>
    </cofactor>
    <text evidence="1">Binds 2 divalent metal cations per subunit.</text>
</comment>
<comment type="similarity">
    <text evidence="2">Belongs to the peptidase M42 family.</text>
</comment>
<sequence>MTSVRKTMELIKELVSIPSPTGNTYEVINYIESLLKEWKVETVRNHKGGLIATLPGRDTSRHRMLTAHVDTLGAMVKEIKADGRLKIDLIGGFRYNSIEGEYCQIETASGKMYTGTILMHQTSVHVYKDAGKAERNQENMEIRLDEPVHCRKDTEELGIGVGDFVSFDPRVEITSSGFIKSRHLDDKASVALLLRLIHEIQTEDIELPYTTHFLISNNEEIGYGGNSNIPPETVEYLAVDMGAIGDGQATDEYSVSICVKDASGPYHYQLRKHLVQLAEKHHIDYKLDIYPYYGSDASAAIKSGHDIVHGLIGPGIDASHAFERTHKSSLRHTAKLLYYYVQSPMV</sequence>
<evidence type="ECO:0000250" key="1"/>
<evidence type="ECO:0000305" key="2"/>
<gene>
    <name type="primary">yhfE</name>
    <name type="ordered locus">BSU10200</name>
</gene>
<proteinExistence type="inferred from homology"/>
<keyword id="KW-0031">Aminopeptidase</keyword>
<keyword id="KW-0378">Hydrolase</keyword>
<keyword id="KW-0479">Metal-binding</keyword>
<keyword id="KW-0482">Metalloprotease</keyword>
<keyword id="KW-0645">Protease</keyword>
<keyword id="KW-1185">Reference proteome</keyword>